<proteinExistence type="inferred from homology"/>
<evidence type="ECO:0000255" key="1">
    <source>
        <dbReference type="HAMAP-Rule" id="MF_00567"/>
    </source>
</evidence>
<organism>
    <name type="scientific">Salmonella gallinarum (strain 287/91 / NCTC 13346)</name>
    <dbReference type="NCBI Taxonomy" id="550538"/>
    <lineage>
        <taxon>Bacteria</taxon>
        <taxon>Pseudomonadati</taxon>
        <taxon>Pseudomonadota</taxon>
        <taxon>Gammaproteobacteria</taxon>
        <taxon>Enterobacterales</taxon>
        <taxon>Enterobacteriaceae</taxon>
        <taxon>Salmonella</taxon>
    </lineage>
</organism>
<comment type="function">
    <text evidence="1">Catalyzes the condensation of iminoaspartate with dihydroxyacetone phosphate to form quinolinate.</text>
</comment>
<comment type="catalytic activity">
    <reaction evidence="1">
        <text>iminosuccinate + dihydroxyacetone phosphate = quinolinate + phosphate + 2 H2O + H(+)</text>
        <dbReference type="Rhea" id="RHEA:25888"/>
        <dbReference type="ChEBI" id="CHEBI:15377"/>
        <dbReference type="ChEBI" id="CHEBI:15378"/>
        <dbReference type="ChEBI" id="CHEBI:29959"/>
        <dbReference type="ChEBI" id="CHEBI:43474"/>
        <dbReference type="ChEBI" id="CHEBI:57642"/>
        <dbReference type="ChEBI" id="CHEBI:77875"/>
        <dbReference type="EC" id="2.5.1.72"/>
    </reaction>
    <physiologicalReaction direction="left-to-right" evidence="1">
        <dbReference type="Rhea" id="RHEA:25889"/>
    </physiologicalReaction>
</comment>
<comment type="cofactor">
    <cofactor evidence="1">
        <name>[4Fe-4S] cluster</name>
        <dbReference type="ChEBI" id="CHEBI:49883"/>
    </cofactor>
    <text evidence="1">Binds 1 [4Fe-4S] cluster per subunit.</text>
</comment>
<comment type="pathway">
    <text evidence="1">Cofactor biosynthesis; NAD(+) biosynthesis; quinolinate from iminoaspartate: step 1/1.</text>
</comment>
<comment type="subcellular location">
    <subcellularLocation>
        <location evidence="1">Cytoplasm</location>
    </subcellularLocation>
</comment>
<comment type="similarity">
    <text evidence="1">Belongs to the quinolinate synthase family. Type 1 subfamily.</text>
</comment>
<name>NADA_SALG2</name>
<accession>B5R6A2</accession>
<keyword id="KW-0004">4Fe-4S</keyword>
<keyword id="KW-0963">Cytoplasm</keyword>
<keyword id="KW-0408">Iron</keyword>
<keyword id="KW-0411">Iron-sulfur</keyword>
<keyword id="KW-0479">Metal-binding</keyword>
<keyword id="KW-0662">Pyridine nucleotide biosynthesis</keyword>
<keyword id="KW-0808">Transferase</keyword>
<sequence>MSVMFDPQAAIYPFPPKPTPLNDDEKQFYREKIKRLLKERNAVMVAHYYTDPEIQQLAEETGGCISDSLEMARFGAKHAASTLLVSGVRFMGETAKILSPEKNILMPTLAAECSLDLGCPIDEFSAFCDAHPDRTVVVYANTSAAVKARADWVVTSSIAVELIEHLDSLGEKIIWAPDRHLGNYVQKQTGADVLCWQGACIVHDEFKTQALTRLKKIYPYAALLVHPESPQSIVEMADAVGSTSQLIKAAKTLPHRQLIVATDRGIFYKMQQAVPEKELLEAPTAGEGATCRSCAHCPWMAMNGLKAIAEGLEQGGAAHEIQVDAALREGALLPLNRMLDFVATLRA</sequence>
<dbReference type="EC" id="2.5.1.72" evidence="1"/>
<dbReference type="EMBL" id="AM933173">
    <property type="protein sequence ID" value="CAR36630.1"/>
    <property type="molecule type" value="Genomic_DNA"/>
</dbReference>
<dbReference type="RefSeq" id="WP_000115345.1">
    <property type="nucleotide sequence ID" value="NC_011274.1"/>
</dbReference>
<dbReference type="SMR" id="B5R6A2"/>
<dbReference type="KEGG" id="seg:SG0734"/>
<dbReference type="HOGENOM" id="CLU_047382_1_0_6"/>
<dbReference type="UniPathway" id="UPA00253">
    <property type="reaction ID" value="UER00327"/>
</dbReference>
<dbReference type="Proteomes" id="UP000008321">
    <property type="component" value="Chromosome"/>
</dbReference>
<dbReference type="GO" id="GO:0005829">
    <property type="term" value="C:cytosol"/>
    <property type="evidence" value="ECO:0007669"/>
    <property type="project" value="TreeGrafter"/>
</dbReference>
<dbReference type="GO" id="GO:0051539">
    <property type="term" value="F:4 iron, 4 sulfur cluster binding"/>
    <property type="evidence" value="ECO:0007669"/>
    <property type="project" value="UniProtKB-KW"/>
</dbReference>
<dbReference type="GO" id="GO:0046872">
    <property type="term" value="F:metal ion binding"/>
    <property type="evidence" value="ECO:0007669"/>
    <property type="project" value="UniProtKB-KW"/>
</dbReference>
<dbReference type="GO" id="GO:0008987">
    <property type="term" value="F:quinolinate synthetase A activity"/>
    <property type="evidence" value="ECO:0007669"/>
    <property type="project" value="UniProtKB-UniRule"/>
</dbReference>
<dbReference type="GO" id="GO:0034628">
    <property type="term" value="P:'de novo' NAD biosynthetic process from L-aspartate"/>
    <property type="evidence" value="ECO:0007669"/>
    <property type="project" value="TreeGrafter"/>
</dbReference>
<dbReference type="FunFam" id="3.40.50.10800:FF:000003">
    <property type="entry name" value="Quinolinate synthase A"/>
    <property type="match status" value="1"/>
</dbReference>
<dbReference type="Gene3D" id="3.40.50.10800">
    <property type="entry name" value="NadA-like"/>
    <property type="match status" value="3"/>
</dbReference>
<dbReference type="HAMAP" id="MF_00567">
    <property type="entry name" value="NadA_type1"/>
    <property type="match status" value="1"/>
</dbReference>
<dbReference type="InterPro" id="IPR003473">
    <property type="entry name" value="NadA"/>
</dbReference>
<dbReference type="InterPro" id="IPR036094">
    <property type="entry name" value="NadA_sf"/>
</dbReference>
<dbReference type="InterPro" id="IPR023513">
    <property type="entry name" value="Quinolinate_synth_A_type1"/>
</dbReference>
<dbReference type="NCBIfam" id="TIGR00550">
    <property type="entry name" value="nadA"/>
    <property type="match status" value="1"/>
</dbReference>
<dbReference type="NCBIfam" id="NF006877">
    <property type="entry name" value="PRK09375.1-1"/>
    <property type="match status" value="1"/>
</dbReference>
<dbReference type="NCBIfam" id="NF006878">
    <property type="entry name" value="PRK09375.1-2"/>
    <property type="match status" value="1"/>
</dbReference>
<dbReference type="PANTHER" id="PTHR30573:SF0">
    <property type="entry name" value="QUINOLINATE SYNTHASE, CHLOROPLASTIC"/>
    <property type="match status" value="1"/>
</dbReference>
<dbReference type="PANTHER" id="PTHR30573">
    <property type="entry name" value="QUINOLINATE SYNTHETASE A"/>
    <property type="match status" value="1"/>
</dbReference>
<dbReference type="Pfam" id="PF02445">
    <property type="entry name" value="NadA"/>
    <property type="match status" value="1"/>
</dbReference>
<dbReference type="SUPFAM" id="SSF142754">
    <property type="entry name" value="NadA-like"/>
    <property type="match status" value="1"/>
</dbReference>
<protein>
    <recommendedName>
        <fullName evidence="1">Quinolinate synthase</fullName>
        <ecNumber evidence="1">2.5.1.72</ecNumber>
    </recommendedName>
</protein>
<reference key="1">
    <citation type="journal article" date="2008" name="Genome Res.">
        <title>Comparative genome analysis of Salmonella enteritidis PT4 and Salmonella gallinarum 287/91 provides insights into evolutionary and host adaptation pathways.</title>
        <authorList>
            <person name="Thomson N.R."/>
            <person name="Clayton D.J."/>
            <person name="Windhorst D."/>
            <person name="Vernikos G."/>
            <person name="Davidson S."/>
            <person name="Churcher C."/>
            <person name="Quail M.A."/>
            <person name="Stevens M."/>
            <person name="Jones M.A."/>
            <person name="Watson M."/>
            <person name="Barron A."/>
            <person name="Layton A."/>
            <person name="Pickard D."/>
            <person name="Kingsley R.A."/>
            <person name="Bignell A."/>
            <person name="Clark L."/>
            <person name="Harris B."/>
            <person name="Ormond D."/>
            <person name="Abdellah Z."/>
            <person name="Brooks K."/>
            <person name="Cherevach I."/>
            <person name="Chillingworth T."/>
            <person name="Woodward J."/>
            <person name="Norberczak H."/>
            <person name="Lord A."/>
            <person name="Arrowsmith C."/>
            <person name="Jagels K."/>
            <person name="Moule S."/>
            <person name="Mungall K."/>
            <person name="Saunders M."/>
            <person name="Whitehead S."/>
            <person name="Chabalgoity J.A."/>
            <person name="Maskell D."/>
            <person name="Humphreys T."/>
            <person name="Roberts M."/>
            <person name="Barrow P.A."/>
            <person name="Dougan G."/>
            <person name="Parkhill J."/>
        </authorList>
    </citation>
    <scope>NUCLEOTIDE SEQUENCE [LARGE SCALE GENOMIC DNA]</scope>
    <source>
        <strain>287/91 / NCTC 13346</strain>
    </source>
</reference>
<feature type="chain" id="PRO_1000129424" description="Quinolinate synthase">
    <location>
        <begin position="1"/>
        <end position="347"/>
    </location>
</feature>
<feature type="binding site" evidence="1">
    <location>
        <position position="47"/>
    </location>
    <ligand>
        <name>iminosuccinate</name>
        <dbReference type="ChEBI" id="CHEBI:77875"/>
    </ligand>
</feature>
<feature type="binding site" evidence="1">
    <location>
        <position position="68"/>
    </location>
    <ligand>
        <name>iminosuccinate</name>
        <dbReference type="ChEBI" id="CHEBI:77875"/>
    </ligand>
</feature>
<feature type="binding site" evidence="1">
    <location>
        <position position="113"/>
    </location>
    <ligand>
        <name>[4Fe-4S] cluster</name>
        <dbReference type="ChEBI" id="CHEBI:49883"/>
    </ligand>
</feature>
<feature type="binding site" evidence="1">
    <location>
        <begin position="139"/>
        <end position="141"/>
    </location>
    <ligand>
        <name>iminosuccinate</name>
        <dbReference type="ChEBI" id="CHEBI:77875"/>
    </ligand>
</feature>
<feature type="binding site" evidence="1">
    <location>
        <position position="156"/>
    </location>
    <ligand>
        <name>iminosuccinate</name>
        <dbReference type="ChEBI" id="CHEBI:77875"/>
    </ligand>
</feature>
<feature type="binding site" evidence="1">
    <location>
        <position position="200"/>
    </location>
    <ligand>
        <name>[4Fe-4S] cluster</name>
        <dbReference type="ChEBI" id="CHEBI:49883"/>
    </ligand>
</feature>
<feature type="binding site" evidence="1">
    <location>
        <begin position="226"/>
        <end position="228"/>
    </location>
    <ligand>
        <name>iminosuccinate</name>
        <dbReference type="ChEBI" id="CHEBI:77875"/>
    </ligand>
</feature>
<feature type="binding site" evidence="1">
    <location>
        <position position="243"/>
    </location>
    <ligand>
        <name>iminosuccinate</name>
        <dbReference type="ChEBI" id="CHEBI:77875"/>
    </ligand>
</feature>
<feature type="binding site" evidence="1">
    <location>
        <position position="297"/>
    </location>
    <ligand>
        <name>[4Fe-4S] cluster</name>
        <dbReference type="ChEBI" id="CHEBI:49883"/>
    </ligand>
</feature>
<gene>
    <name evidence="1" type="primary">nadA</name>
    <name type="ordered locus">SG0734</name>
</gene>